<accession>P35612</accession>
<accession>A8K4P2</accession>
<accession>B4DM17</accession>
<accession>D6W5G7</accession>
<accession>D6W5G8</accession>
<accession>Q13482</accession>
<accession>Q16412</accession>
<accession>Q59G82</accession>
<accession>Q5U5P4</accession>
<accession>Q6P0P2</accession>
<accession>Q6PGQ4</accession>
<accession>Q7Z688</accession>
<accession>Q7Z689</accession>
<accession>Q7Z690</accession>
<accession>Q7Z691</accession>
<proteinExistence type="evidence at protein level"/>
<protein>
    <recommendedName>
        <fullName>Beta-adducin</fullName>
    </recommendedName>
    <alternativeName>
        <fullName>Erythrocyte adducin subunit beta</fullName>
    </alternativeName>
</protein>
<gene>
    <name type="primary">ADD2</name>
    <name type="synonym">ADDB</name>
</gene>
<feature type="chain" id="PRO_0000218533" description="Beta-adducin">
    <location>
        <begin position="1"/>
        <end position="726"/>
    </location>
</feature>
<feature type="region of interest" description="Disordered" evidence="4">
    <location>
        <begin position="1"/>
        <end position="25"/>
    </location>
</feature>
<feature type="region of interest" description="Interaction with calmodulin" evidence="3">
    <location>
        <begin position="425"/>
        <end position="444"/>
    </location>
</feature>
<feature type="region of interest" description="Disordered" evidence="4">
    <location>
        <begin position="525"/>
        <end position="726"/>
    </location>
</feature>
<feature type="region of interest" description="Interaction with calmodulin" evidence="3">
    <location>
        <begin position="704"/>
        <end position="721"/>
    </location>
</feature>
<feature type="compositionally biased region" description="Basic and acidic residues" evidence="4">
    <location>
        <begin position="566"/>
        <end position="586"/>
    </location>
</feature>
<feature type="compositionally biased region" description="Low complexity" evidence="4">
    <location>
        <begin position="588"/>
        <end position="606"/>
    </location>
</feature>
<feature type="compositionally biased region" description="Basic and acidic residues" evidence="4">
    <location>
        <begin position="621"/>
        <end position="631"/>
    </location>
</feature>
<feature type="compositionally biased region" description="Low complexity" evidence="4">
    <location>
        <begin position="632"/>
        <end position="645"/>
    </location>
</feature>
<feature type="compositionally biased region" description="Polar residues" evidence="4">
    <location>
        <begin position="665"/>
        <end position="674"/>
    </location>
</feature>
<feature type="compositionally biased region" description="Low complexity" evidence="4">
    <location>
        <begin position="689"/>
        <end position="701"/>
    </location>
</feature>
<feature type="compositionally biased region" description="Basic residues" evidence="4">
    <location>
        <begin position="702"/>
        <end position="726"/>
    </location>
</feature>
<feature type="modified residue" description="Phosphoserine" evidence="16">
    <location>
        <position position="11"/>
    </location>
</feature>
<feature type="modified residue" description="Phosphoserine" evidence="1">
    <location>
        <position position="25"/>
    </location>
</feature>
<feature type="modified residue" description="Phosphothreonine; by PKA" evidence="8">
    <location>
        <position position="55"/>
    </location>
</feature>
<feature type="modified residue" description="Phosphoserine" evidence="2">
    <location>
        <position position="60"/>
    </location>
</feature>
<feature type="modified residue" description="Phosphoserine" evidence="2">
    <location>
        <position position="344"/>
    </location>
</feature>
<feature type="modified residue" description="Phosphoserine" evidence="15 16">
    <location>
        <position position="530"/>
    </location>
</feature>
<feature type="modified residue" description="Phosphoserine" evidence="16">
    <location>
        <position position="532"/>
    </location>
</feature>
<feature type="modified residue" description="Phosphothreonine" evidence="2">
    <location>
        <position position="533"/>
    </location>
</feature>
<feature type="modified residue" description="Phosphoserine" evidence="2">
    <location>
        <position position="535"/>
    </location>
</feature>
<feature type="modified residue" description="Phosphoserine" evidence="15 16">
    <location>
        <position position="592"/>
    </location>
</feature>
<feature type="modified residue" description="Phosphoserine" evidence="15 16 17">
    <location>
        <position position="596"/>
    </location>
</feature>
<feature type="modified residue" description="Phosphoserine" evidence="15 16">
    <location>
        <position position="600"/>
    </location>
</feature>
<feature type="modified residue" description="Phosphoserine" evidence="15">
    <location>
        <position position="604"/>
    </location>
</feature>
<feature type="modified residue" description="Phosphothreonine" evidence="15">
    <location>
        <position position="611"/>
    </location>
</feature>
<feature type="modified residue" description="Phosphoserine" evidence="15 16">
    <location>
        <position position="613"/>
    </location>
</feature>
<feature type="modified residue" description="Phosphoserine" evidence="15 16">
    <location>
        <position position="617"/>
    </location>
</feature>
<feature type="modified residue" description="Phosphoserine" evidence="2">
    <location>
        <position position="619"/>
    </location>
</feature>
<feature type="modified residue" description="Phosphoserine" evidence="16">
    <location>
        <position position="621"/>
    </location>
</feature>
<feature type="modified residue" description="Phosphothreonine" evidence="16">
    <location>
        <position position="675"/>
    </location>
</feature>
<feature type="modified residue" description="Phosphoserine" evidence="1">
    <location>
        <position position="686"/>
    </location>
</feature>
<feature type="modified residue" description="Phosphoserine" evidence="2">
    <location>
        <position position="689"/>
    </location>
</feature>
<feature type="modified residue" description="Phosphoserine" evidence="15 16">
    <location>
        <position position="693"/>
    </location>
</feature>
<feature type="modified residue" description="Phosphoserine" evidence="15 16">
    <location>
        <position position="697"/>
    </location>
</feature>
<feature type="modified residue" description="Phosphoserine" evidence="2">
    <location>
        <position position="699"/>
    </location>
</feature>
<feature type="modified residue" description="Phosphoserine" evidence="2">
    <location>
        <position position="701"/>
    </location>
</feature>
<feature type="modified residue" description="Phosphoserine; by PKC" evidence="8">
    <location>
        <position position="703"/>
    </location>
</feature>
<feature type="modified residue" description="Phosphoserine; by PKA and PKC" evidence="8">
    <location>
        <position position="713"/>
    </location>
</feature>
<feature type="splice variant" id="VSP_043625" description="In isoform 8." evidence="10">
    <original>M</original>
    <variation>MPRRRVPGANCKPTGK</variation>
    <location>
        <position position="1"/>
    </location>
</feature>
<feature type="splice variant" id="VSP_055309" description="In isoform 9." evidence="10">
    <original>M</original>
    <variation>MPRRRVPGANCKPTGKM</variation>
    <location>
        <position position="1"/>
    </location>
</feature>
<feature type="splice variant" id="VSP_017241" description="In isoform 7." evidence="9">
    <location>
        <begin position="78"/>
        <end position="566"/>
    </location>
</feature>
<feature type="splice variant" id="VSP_017242" description="In isoform 5 and isoform 6." evidence="9">
    <location>
        <begin position="188"/>
        <end position="493"/>
    </location>
</feature>
<feature type="splice variant" id="VSP_000181" description="In isoform 2, isoform 8 and isoform 9." evidence="10 12">
    <original>STESQLMSKGDEDTKDDSEETVPNPFSQ</original>
    <variation>VEQRLPLTGGETCLPSGSSVPGAGLQDP</variation>
    <location>
        <begin position="532"/>
        <end position="559"/>
    </location>
</feature>
<feature type="splice variant" id="VSP_000182" description="In isoform 2, isoform 8 and isoform 9." evidence="10 12">
    <location>
        <begin position="560"/>
        <end position="726"/>
    </location>
</feature>
<feature type="splice variant" id="VSP_000183" description="In isoform 3." evidence="11 13">
    <original>GEKETAPEEPGSPAKSAPASPVQSPAKEAETKSPLVSPSKSLEEGTKKTETSKAATTEPETTQPEGVVVNGREEEQTAEEILSKGLSQMTTSADTDVDTSKDKTESVTSGPMSPEGSPSKSPSKKKKKFRTPSFLKKSKKKEKVES</original>
    <variation>ETGQEREPGSGPAVCEFFSVALHIWSNILERKKLPQKSLAHLQSLHLLLQCRAQRRRQRQRAL</variation>
    <location>
        <begin position="581"/>
        <end position="726"/>
    </location>
</feature>
<feature type="splice variant" id="VSP_017244" description="In isoform 4, isoform 6 and isoform 7." evidence="9">
    <original>GEKETAP</original>
    <variation>APGWFSS</variation>
    <location>
        <begin position="581"/>
        <end position="587"/>
    </location>
</feature>
<feature type="splice variant" id="VSP_017243" description="In isoform 5." evidence="9">
    <original>GEKETA</original>
    <variation>ETGQER</variation>
    <location>
        <begin position="581"/>
        <end position="586"/>
    </location>
</feature>
<feature type="splice variant" id="VSP_017245" description="In isoform 5." evidence="9">
    <location>
        <begin position="587"/>
        <end position="726"/>
    </location>
</feature>
<feature type="splice variant" id="VSP_017246" description="In isoform 4, isoform 6 and isoform 7." evidence="9">
    <location>
        <begin position="588"/>
        <end position="726"/>
    </location>
</feature>
<feature type="sequence variant" id="VAR_014866" description="In dbSNP:rs4986.">
    <original>D</original>
    <variation>N</variation>
    <location>
        <position position="28"/>
    </location>
</feature>
<feature type="sequence variant" id="VAR_048195" description="In dbSNP:rs4987.">
    <original>S</original>
    <variation>C</variation>
    <location>
        <position position="98"/>
    </location>
</feature>
<feature type="sequence variant" id="VAR_014867" description="In dbSNP:rs4982.">
    <original>E</original>
    <variation>D</variation>
    <location>
        <position position="335"/>
    </location>
</feature>
<feature type="sequence variant" id="VAR_025318" description="In dbSNP:rs17855969." evidence="6">
    <original>T</original>
    <variation>A</variation>
    <location>
        <position position="439"/>
    </location>
</feature>
<feature type="sequence variant" id="VAR_014868" description="In dbSNP:rs4985.">
    <original>S</original>
    <variation>R</variation>
    <location>
        <position position="663"/>
    </location>
</feature>
<organism>
    <name type="scientific">Homo sapiens</name>
    <name type="common">Human</name>
    <dbReference type="NCBI Taxonomy" id="9606"/>
    <lineage>
        <taxon>Eukaryota</taxon>
        <taxon>Metazoa</taxon>
        <taxon>Chordata</taxon>
        <taxon>Craniata</taxon>
        <taxon>Vertebrata</taxon>
        <taxon>Euteleostomi</taxon>
        <taxon>Mammalia</taxon>
        <taxon>Eutheria</taxon>
        <taxon>Euarchontoglires</taxon>
        <taxon>Primates</taxon>
        <taxon>Haplorrhini</taxon>
        <taxon>Catarrhini</taxon>
        <taxon>Hominidae</taxon>
        <taxon>Homo</taxon>
    </lineage>
</organism>
<dbReference type="EMBL" id="X58199">
    <property type="protein sequence ID" value="CAA41176.1"/>
    <property type="molecule type" value="mRNA"/>
</dbReference>
<dbReference type="EMBL" id="AF486420">
    <property type="protein sequence ID" value="AAP71863.1"/>
    <property type="molecule type" value="mRNA"/>
</dbReference>
<dbReference type="EMBL" id="AF486421">
    <property type="protein sequence ID" value="AAP71864.1"/>
    <property type="molecule type" value="mRNA"/>
</dbReference>
<dbReference type="EMBL" id="AF486422">
    <property type="protein sequence ID" value="AAP71865.1"/>
    <property type="molecule type" value="mRNA"/>
</dbReference>
<dbReference type="EMBL" id="AF486423">
    <property type="protein sequence ID" value="AAP71866.1"/>
    <property type="molecule type" value="mRNA"/>
</dbReference>
<dbReference type="EMBL" id="AK291007">
    <property type="protein sequence ID" value="BAF83696.1"/>
    <property type="molecule type" value="mRNA"/>
</dbReference>
<dbReference type="EMBL" id="AK297250">
    <property type="protein sequence ID" value="BAG59729.1"/>
    <property type="molecule type" value="mRNA"/>
</dbReference>
<dbReference type="EMBL" id="AK309773">
    <property type="status" value="NOT_ANNOTATED_CDS"/>
    <property type="molecule type" value="mRNA"/>
</dbReference>
<dbReference type="EMBL" id="AB209227">
    <property type="protein sequence ID" value="BAD92464.1"/>
    <property type="status" value="ALT_INIT"/>
    <property type="molecule type" value="mRNA"/>
</dbReference>
<dbReference type="EMBL" id="AB593080">
    <property type="protein sequence ID" value="BAJ84020.1"/>
    <property type="molecule type" value="mRNA"/>
</dbReference>
<dbReference type="EMBL" id="AC005234">
    <property type="protein sequence ID" value="AAD12715.1"/>
    <property type="molecule type" value="Genomic_DNA"/>
</dbReference>
<dbReference type="EMBL" id="AC007395">
    <property type="status" value="NOT_ANNOTATED_CDS"/>
    <property type="molecule type" value="Genomic_DNA"/>
</dbReference>
<dbReference type="EMBL" id="CH471053">
    <property type="protein sequence ID" value="EAW99801.1"/>
    <property type="molecule type" value="Genomic_DNA"/>
</dbReference>
<dbReference type="EMBL" id="CH471053">
    <property type="protein sequence ID" value="EAW99806.1"/>
    <property type="molecule type" value="Genomic_DNA"/>
</dbReference>
<dbReference type="EMBL" id="CH471053">
    <property type="protein sequence ID" value="EAW99807.1"/>
    <property type="molecule type" value="Genomic_DNA"/>
</dbReference>
<dbReference type="EMBL" id="CH471053">
    <property type="protein sequence ID" value="EAW99808.1"/>
    <property type="molecule type" value="Genomic_DNA"/>
</dbReference>
<dbReference type="EMBL" id="BC041666">
    <property type="protein sequence ID" value="AAH41666.1"/>
    <property type="molecule type" value="mRNA"/>
</dbReference>
<dbReference type="EMBL" id="BC051882">
    <property type="protein sequence ID" value="AAH51882.1"/>
    <property type="molecule type" value="mRNA"/>
</dbReference>
<dbReference type="EMBL" id="BC056881">
    <property type="protein sequence ID" value="AAH56881.1"/>
    <property type="molecule type" value="mRNA"/>
</dbReference>
<dbReference type="EMBL" id="BC065525">
    <property type="protein sequence ID" value="AAH65525.1"/>
    <property type="molecule type" value="mRNA"/>
</dbReference>
<dbReference type="EMBL" id="U43959">
    <property type="protein sequence ID" value="AAA86421.1"/>
    <property type="molecule type" value="mRNA"/>
</dbReference>
<dbReference type="EMBL" id="S81079">
    <property type="protein sequence ID" value="AAD14349.1"/>
    <property type="molecule type" value="Genomic_DNA"/>
</dbReference>
<dbReference type="EMBL" id="S81077">
    <property type="protein sequence ID" value="AAD14349.1"/>
    <property type="status" value="JOINED"/>
    <property type="molecule type" value="Genomic_DNA"/>
</dbReference>
<dbReference type="CCDS" id="CCDS1906.1">
    <molecule id="P35612-1"/>
</dbReference>
<dbReference type="CCDS" id="CCDS1909.1">
    <molecule id="P35612-3"/>
</dbReference>
<dbReference type="CCDS" id="CCDS46318.1">
    <molecule id="P35612-2"/>
</dbReference>
<dbReference type="CCDS" id="CCDS54365.1">
    <molecule id="P35612-9"/>
</dbReference>
<dbReference type="PIR" id="S18208">
    <property type="entry name" value="S18208"/>
</dbReference>
<dbReference type="RefSeq" id="NP_001171983.1">
    <molecule id="P35612-1"/>
    <property type="nucleotide sequence ID" value="NM_001185054.2"/>
</dbReference>
<dbReference type="RefSeq" id="NP_001171984.1">
    <molecule id="P35612-9"/>
    <property type="nucleotide sequence ID" value="NM_001185055.2"/>
</dbReference>
<dbReference type="RefSeq" id="NP_001608.1">
    <molecule id="P35612-1"/>
    <property type="nucleotide sequence ID" value="NM_001617.4"/>
</dbReference>
<dbReference type="RefSeq" id="NP_059516.2">
    <molecule id="P35612-2"/>
    <property type="nucleotide sequence ID" value="NM_017482.4"/>
</dbReference>
<dbReference type="RefSeq" id="NP_059522.1">
    <molecule id="P35612-3"/>
    <property type="nucleotide sequence ID" value="NM_017488.4"/>
</dbReference>
<dbReference type="RefSeq" id="XP_011530804.1">
    <molecule id="P35612-1"/>
    <property type="nucleotide sequence ID" value="XM_011532502.3"/>
</dbReference>
<dbReference type="RefSeq" id="XP_054196402.1">
    <molecule id="P35612-1"/>
    <property type="nucleotide sequence ID" value="XM_054340427.1"/>
</dbReference>
<dbReference type="SMR" id="P35612"/>
<dbReference type="BioGRID" id="106632">
    <property type="interactions" value="80"/>
</dbReference>
<dbReference type="ComplexPortal" id="CPX-2638">
    <property type="entry name" value="Adducin complex, alpha-beta variant"/>
</dbReference>
<dbReference type="CORUM" id="P35612"/>
<dbReference type="FunCoup" id="P35612">
    <property type="interactions" value="995"/>
</dbReference>
<dbReference type="IntAct" id="P35612">
    <property type="interactions" value="38"/>
</dbReference>
<dbReference type="MINT" id="P35612"/>
<dbReference type="STRING" id="9606.ENSP00000264436"/>
<dbReference type="GlyGen" id="P35612">
    <property type="glycosylation" value="2 sites, 1 O-linked glycan (2 sites)"/>
</dbReference>
<dbReference type="iPTMnet" id="P35612"/>
<dbReference type="PhosphoSitePlus" id="P35612"/>
<dbReference type="SwissPalm" id="P35612"/>
<dbReference type="BioMuta" id="ADD2"/>
<dbReference type="DMDM" id="543774"/>
<dbReference type="jPOST" id="P35612"/>
<dbReference type="MassIVE" id="P35612"/>
<dbReference type="PaxDb" id="9606-ENSP00000264436"/>
<dbReference type="PeptideAtlas" id="P35612"/>
<dbReference type="ProteomicsDB" id="55105">
    <molecule id="P35612-1"/>
</dbReference>
<dbReference type="ProteomicsDB" id="55106">
    <molecule id="P35612-2"/>
</dbReference>
<dbReference type="ProteomicsDB" id="55107">
    <molecule id="P35612-3"/>
</dbReference>
<dbReference type="ProteomicsDB" id="55108">
    <molecule id="P35612-4"/>
</dbReference>
<dbReference type="ProteomicsDB" id="55109">
    <molecule id="P35612-5"/>
</dbReference>
<dbReference type="ProteomicsDB" id="55110">
    <molecule id="P35612-6"/>
</dbReference>
<dbReference type="ProteomicsDB" id="55111">
    <molecule id="P35612-7"/>
</dbReference>
<dbReference type="ProteomicsDB" id="55112">
    <molecule id="P35612-8"/>
</dbReference>
<dbReference type="Pumba" id="P35612"/>
<dbReference type="Antibodypedia" id="4066">
    <property type="antibodies" value="235 antibodies from 29 providers"/>
</dbReference>
<dbReference type="DNASU" id="119"/>
<dbReference type="Ensembl" id="ENST00000264436.9">
    <molecule id="P35612-1"/>
    <property type="protein sequence ID" value="ENSP00000264436.3"/>
    <property type="gene ID" value="ENSG00000075340.23"/>
</dbReference>
<dbReference type="Ensembl" id="ENST00000355733.7">
    <molecule id="P35612-3"/>
    <property type="protein sequence ID" value="ENSP00000347972.3"/>
    <property type="gene ID" value="ENSG00000075340.23"/>
</dbReference>
<dbReference type="Ensembl" id="ENST00000403045.6">
    <molecule id="P35612-1"/>
    <property type="protein sequence ID" value="ENSP00000384303.2"/>
    <property type="gene ID" value="ENSG00000075340.23"/>
</dbReference>
<dbReference type="Ensembl" id="ENST00000407644.6">
    <molecule id="P35612-1"/>
    <property type="protein sequence ID" value="ENSP00000384677.2"/>
    <property type="gene ID" value="ENSG00000075340.23"/>
</dbReference>
<dbReference type="Ensembl" id="ENST00000413157.6">
    <molecule id="P35612-2"/>
    <property type="protein sequence ID" value="ENSP00000388072.2"/>
    <property type="gene ID" value="ENSG00000075340.23"/>
</dbReference>
<dbReference type="Ensembl" id="ENST00000430656.5">
    <molecule id="P35612-9"/>
    <property type="protein sequence ID" value="ENSP00000398112.1"/>
    <property type="gene ID" value="ENSG00000075340.23"/>
</dbReference>
<dbReference type="GeneID" id="119"/>
<dbReference type="KEGG" id="hsa:119"/>
<dbReference type="MANE-Select" id="ENST00000264436.9">
    <property type="protein sequence ID" value="ENSP00000264436.3"/>
    <property type="RefSeq nucleotide sequence ID" value="NM_001617.4"/>
    <property type="RefSeq protein sequence ID" value="NP_001608.1"/>
</dbReference>
<dbReference type="UCSC" id="uc002sgy.4">
    <molecule id="P35612-1"/>
    <property type="organism name" value="human"/>
</dbReference>
<dbReference type="AGR" id="HGNC:244"/>
<dbReference type="CTD" id="119"/>
<dbReference type="DisGeNET" id="119"/>
<dbReference type="GeneCards" id="ADD2"/>
<dbReference type="HGNC" id="HGNC:244">
    <property type="gene designation" value="ADD2"/>
</dbReference>
<dbReference type="HPA" id="ENSG00000075340">
    <property type="expression patterns" value="Tissue enhanced (bone marrow, brain)"/>
</dbReference>
<dbReference type="MIM" id="102681">
    <property type="type" value="gene"/>
</dbReference>
<dbReference type="neXtProt" id="NX_P35612"/>
<dbReference type="OpenTargets" id="ENSG00000075340"/>
<dbReference type="PharmGKB" id="PA24566"/>
<dbReference type="VEuPathDB" id="HostDB:ENSG00000075340"/>
<dbReference type="eggNOG" id="KOG3699">
    <property type="taxonomic scope" value="Eukaryota"/>
</dbReference>
<dbReference type="GeneTree" id="ENSGT00940000159299"/>
<dbReference type="HOGENOM" id="CLU_006033_9_2_1"/>
<dbReference type="InParanoid" id="P35612"/>
<dbReference type="OMA" id="TSGFCLH"/>
<dbReference type="OrthoDB" id="3238794at2759"/>
<dbReference type="PAN-GO" id="P35612">
    <property type="GO annotations" value="5 GO annotations based on evolutionary models"/>
</dbReference>
<dbReference type="PhylomeDB" id="P35612"/>
<dbReference type="TreeFam" id="TF313003"/>
<dbReference type="PathwayCommons" id="P35612"/>
<dbReference type="Reactome" id="R-HSA-5223345">
    <property type="pathway name" value="Miscellaneous transport and binding events"/>
</dbReference>
<dbReference type="SignaLink" id="P35612"/>
<dbReference type="SIGNOR" id="P35612"/>
<dbReference type="BioGRID-ORCS" id="119">
    <property type="hits" value="24 hits in 1157 CRISPR screens"/>
</dbReference>
<dbReference type="CD-CODE" id="FB4E32DD">
    <property type="entry name" value="Presynaptic clusters and postsynaptic densities"/>
</dbReference>
<dbReference type="ChiTaRS" id="ADD2">
    <property type="organism name" value="human"/>
</dbReference>
<dbReference type="GeneWiki" id="ADD2"/>
<dbReference type="GenomeRNAi" id="119"/>
<dbReference type="Pharos" id="P35612">
    <property type="development level" value="Tbio"/>
</dbReference>
<dbReference type="PRO" id="PR:P35612"/>
<dbReference type="Proteomes" id="UP000005640">
    <property type="component" value="Chromosome 2"/>
</dbReference>
<dbReference type="RNAct" id="P35612">
    <property type="molecule type" value="protein"/>
</dbReference>
<dbReference type="Bgee" id="ENSG00000075340">
    <property type="expression patterns" value="Expressed in Brodmann (1909) area 10 and 171 other cell types or tissues"/>
</dbReference>
<dbReference type="ExpressionAtlas" id="P35612">
    <property type="expression patterns" value="baseline and differential"/>
</dbReference>
<dbReference type="GO" id="GO:0031410">
    <property type="term" value="C:cytoplasmic vesicle"/>
    <property type="evidence" value="ECO:0000314"/>
    <property type="project" value="UniProtKB"/>
</dbReference>
<dbReference type="GO" id="GO:0005856">
    <property type="term" value="C:cytoskeleton"/>
    <property type="evidence" value="ECO:0000318"/>
    <property type="project" value="GO_Central"/>
</dbReference>
<dbReference type="GO" id="GO:0005829">
    <property type="term" value="C:cytosol"/>
    <property type="evidence" value="ECO:0000304"/>
    <property type="project" value="Reactome"/>
</dbReference>
<dbReference type="GO" id="GO:0008290">
    <property type="term" value="C:F-actin capping protein complex"/>
    <property type="evidence" value="ECO:0000314"/>
    <property type="project" value="BHF-UCL"/>
</dbReference>
<dbReference type="GO" id="GO:0005886">
    <property type="term" value="C:plasma membrane"/>
    <property type="evidence" value="ECO:0000318"/>
    <property type="project" value="GO_Central"/>
</dbReference>
<dbReference type="GO" id="GO:0044853">
    <property type="term" value="C:plasma membrane raft"/>
    <property type="evidence" value="ECO:0000315"/>
    <property type="project" value="CAFA"/>
</dbReference>
<dbReference type="GO" id="GO:0014069">
    <property type="term" value="C:postsynaptic density"/>
    <property type="evidence" value="ECO:0000318"/>
    <property type="project" value="GO_Central"/>
</dbReference>
<dbReference type="GO" id="GO:0003779">
    <property type="term" value="F:actin binding"/>
    <property type="evidence" value="ECO:0000315"/>
    <property type="project" value="CAFA"/>
</dbReference>
<dbReference type="GO" id="GO:0051015">
    <property type="term" value="F:actin filament binding"/>
    <property type="evidence" value="ECO:0000314"/>
    <property type="project" value="BHF-UCL"/>
</dbReference>
<dbReference type="GO" id="GO:0005516">
    <property type="term" value="F:calmodulin binding"/>
    <property type="evidence" value="ECO:0007669"/>
    <property type="project" value="UniProtKB-KW"/>
</dbReference>
<dbReference type="GO" id="GO:0046983">
    <property type="term" value="F:protein dimerization activity"/>
    <property type="evidence" value="ECO:0000353"/>
    <property type="project" value="DisProt"/>
</dbReference>
<dbReference type="GO" id="GO:0046982">
    <property type="term" value="F:protein heterodimerization activity"/>
    <property type="evidence" value="ECO:0000353"/>
    <property type="project" value="BHF-UCL"/>
</dbReference>
<dbReference type="GO" id="GO:0042803">
    <property type="term" value="F:protein homodimerization activity"/>
    <property type="evidence" value="ECO:0000353"/>
    <property type="project" value="BHF-UCL"/>
</dbReference>
<dbReference type="GO" id="GO:0019901">
    <property type="term" value="F:protein kinase binding"/>
    <property type="evidence" value="ECO:0000353"/>
    <property type="project" value="CAFA"/>
</dbReference>
<dbReference type="GO" id="GO:0030507">
    <property type="term" value="F:spectrin binding"/>
    <property type="evidence" value="ECO:0000314"/>
    <property type="project" value="BHF-UCL"/>
</dbReference>
<dbReference type="GO" id="GO:0005200">
    <property type="term" value="F:structural constituent of cytoskeleton"/>
    <property type="evidence" value="ECO:0007669"/>
    <property type="project" value="Ensembl"/>
</dbReference>
<dbReference type="GO" id="GO:0030036">
    <property type="term" value="P:actin cytoskeleton organization"/>
    <property type="evidence" value="ECO:0000305"/>
    <property type="project" value="BHF-UCL"/>
</dbReference>
<dbReference type="GO" id="GO:0051017">
    <property type="term" value="P:actin filament bundle assembly"/>
    <property type="evidence" value="ECO:0000314"/>
    <property type="project" value="BHF-UCL"/>
</dbReference>
<dbReference type="GO" id="GO:0051016">
    <property type="term" value="P:barbed-end actin filament capping"/>
    <property type="evidence" value="ECO:0000314"/>
    <property type="project" value="BHF-UCL"/>
</dbReference>
<dbReference type="GO" id="GO:0030097">
    <property type="term" value="P:hemopoiesis"/>
    <property type="evidence" value="ECO:0007669"/>
    <property type="project" value="Ensembl"/>
</dbReference>
<dbReference type="GO" id="GO:0050900">
    <property type="term" value="P:leukocyte migration"/>
    <property type="evidence" value="ECO:0000315"/>
    <property type="project" value="CAFA"/>
</dbReference>
<dbReference type="GO" id="GO:0050901">
    <property type="term" value="P:leukocyte tethering or rolling"/>
    <property type="evidence" value="ECO:0000315"/>
    <property type="project" value="CAFA"/>
</dbReference>
<dbReference type="GO" id="GO:0032092">
    <property type="term" value="P:positive regulation of protein binding"/>
    <property type="evidence" value="ECO:0000314"/>
    <property type="project" value="BHF-UCL"/>
</dbReference>
<dbReference type="GO" id="GO:0065003">
    <property type="term" value="P:protein-containing complex assembly"/>
    <property type="evidence" value="ECO:0000314"/>
    <property type="project" value="UniProtKB"/>
</dbReference>
<dbReference type="GO" id="GO:0007416">
    <property type="term" value="P:synapse assembly"/>
    <property type="evidence" value="ECO:0007669"/>
    <property type="project" value="Ensembl"/>
</dbReference>
<dbReference type="CDD" id="cd00398">
    <property type="entry name" value="Aldolase_II"/>
    <property type="match status" value="1"/>
</dbReference>
<dbReference type="DisProt" id="DP00241"/>
<dbReference type="FunFam" id="3.40.225.10:FF:000004">
    <property type="entry name" value="gamma-adducin isoform X1"/>
    <property type="match status" value="1"/>
</dbReference>
<dbReference type="Gene3D" id="3.40.225.10">
    <property type="entry name" value="Class II aldolase/adducin N-terminal domain"/>
    <property type="match status" value="1"/>
</dbReference>
<dbReference type="InterPro" id="IPR051017">
    <property type="entry name" value="Aldolase-II_Adducin_sf"/>
</dbReference>
<dbReference type="InterPro" id="IPR001303">
    <property type="entry name" value="Aldolase_II/adducin_N"/>
</dbReference>
<dbReference type="InterPro" id="IPR036409">
    <property type="entry name" value="Aldolase_II/adducin_N_sf"/>
</dbReference>
<dbReference type="PANTHER" id="PTHR10672">
    <property type="entry name" value="ADDUCIN"/>
    <property type="match status" value="1"/>
</dbReference>
<dbReference type="PANTHER" id="PTHR10672:SF6">
    <property type="entry name" value="BETA-ADDUCIN"/>
    <property type="match status" value="1"/>
</dbReference>
<dbReference type="Pfam" id="PF00596">
    <property type="entry name" value="Aldolase_II"/>
    <property type="match status" value="1"/>
</dbReference>
<dbReference type="SMART" id="SM01007">
    <property type="entry name" value="Aldolase_II"/>
    <property type="match status" value="1"/>
</dbReference>
<dbReference type="SUPFAM" id="SSF53639">
    <property type="entry name" value="AraD/HMP-PK domain-like"/>
    <property type="match status" value="1"/>
</dbReference>
<reference key="1">
    <citation type="journal article" date="1991" name="J. Cell Biol.">
        <title>Primary structure and domain organization of human alpha and beta adducin.</title>
        <authorList>
            <person name="Joshi R.L."/>
            <person name="Gilligan D.M."/>
            <person name="Otto E."/>
            <person name="McLaughlin T."/>
            <person name="Bennett V.D."/>
        </authorList>
    </citation>
    <scope>NUCLEOTIDE SEQUENCE [MRNA] (ISOFORM 1)</scope>
    <scope>PARTIAL PROTEIN SEQUENCE</scope>
    <source>
        <tissue>Reticulocyte</tissue>
    </source>
</reference>
<reference key="2">
    <citation type="journal article" date="2003" name="Biochem. Biophys. Res. Commun.">
        <title>Expression analysis of the human adducin gene family and evidence of ADD2 beta4 multiple splicing variants.</title>
        <authorList>
            <person name="Citterio L."/>
            <person name="Tizzoni L."/>
            <person name="Catalano M."/>
            <person name="Zerbini G."/>
            <person name="Bianchi G."/>
            <person name="Barlassina C."/>
        </authorList>
    </citation>
    <scope>NUCLEOTIDE SEQUENCE [MRNA] (ISOFORMS 4; 5; 6 AND 7)</scope>
    <scope>TISSUE SPECIFICITY</scope>
    <scope>DEVELOPMENTAL STAGE</scope>
    <source>
        <tissue>Fetal kidney</tissue>
        <tissue>Umbilical vein endothelial cell</tissue>
    </source>
</reference>
<reference key="3">
    <citation type="journal article" date="2004" name="Nat. Genet.">
        <title>Complete sequencing and characterization of 21,243 full-length human cDNAs.</title>
        <authorList>
            <person name="Ota T."/>
            <person name="Suzuki Y."/>
            <person name="Nishikawa T."/>
            <person name="Otsuki T."/>
            <person name="Sugiyama T."/>
            <person name="Irie R."/>
            <person name="Wakamatsu A."/>
            <person name="Hayashi K."/>
            <person name="Sato H."/>
            <person name="Nagai K."/>
            <person name="Kimura K."/>
            <person name="Makita H."/>
            <person name="Sekine M."/>
            <person name="Obayashi M."/>
            <person name="Nishi T."/>
            <person name="Shibahara T."/>
            <person name="Tanaka T."/>
            <person name="Ishii S."/>
            <person name="Yamamoto J."/>
            <person name="Saito K."/>
            <person name="Kawai Y."/>
            <person name="Isono Y."/>
            <person name="Nakamura Y."/>
            <person name="Nagahari K."/>
            <person name="Murakami K."/>
            <person name="Yasuda T."/>
            <person name="Iwayanagi T."/>
            <person name="Wagatsuma M."/>
            <person name="Shiratori A."/>
            <person name="Sudo H."/>
            <person name="Hosoiri T."/>
            <person name="Kaku Y."/>
            <person name="Kodaira H."/>
            <person name="Kondo H."/>
            <person name="Sugawara M."/>
            <person name="Takahashi M."/>
            <person name="Kanda K."/>
            <person name="Yokoi T."/>
            <person name="Furuya T."/>
            <person name="Kikkawa E."/>
            <person name="Omura Y."/>
            <person name="Abe K."/>
            <person name="Kamihara K."/>
            <person name="Katsuta N."/>
            <person name="Sato K."/>
            <person name="Tanikawa M."/>
            <person name="Yamazaki M."/>
            <person name="Ninomiya K."/>
            <person name="Ishibashi T."/>
            <person name="Yamashita H."/>
            <person name="Murakawa K."/>
            <person name="Fujimori K."/>
            <person name="Tanai H."/>
            <person name="Kimata M."/>
            <person name="Watanabe M."/>
            <person name="Hiraoka S."/>
            <person name="Chiba Y."/>
            <person name="Ishida S."/>
            <person name="Ono Y."/>
            <person name="Takiguchi S."/>
            <person name="Watanabe S."/>
            <person name="Yosida M."/>
            <person name="Hotuta T."/>
            <person name="Kusano J."/>
            <person name="Kanehori K."/>
            <person name="Takahashi-Fujii A."/>
            <person name="Hara H."/>
            <person name="Tanase T.-O."/>
            <person name="Nomura Y."/>
            <person name="Togiya S."/>
            <person name="Komai F."/>
            <person name="Hara R."/>
            <person name="Takeuchi K."/>
            <person name="Arita M."/>
            <person name="Imose N."/>
            <person name="Musashino K."/>
            <person name="Yuuki H."/>
            <person name="Oshima A."/>
            <person name="Sasaki N."/>
            <person name="Aotsuka S."/>
            <person name="Yoshikawa Y."/>
            <person name="Matsunawa H."/>
            <person name="Ichihara T."/>
            <person name="Shiohata N."/>
            <person name="Sano S."/>
            <person name="Moriya S."/>
            <person name="Momiyama H."/>
            <person name="Satoh N."/>
            <person name="Takami S."/>
            <person name="Terashima Y."/>
            <person name="Suzuki O."/>
            <person name="Nakagawa S."/>
            <person name="Senoh A."/>
            <person name="Mizoguchi H."/>
            <person name="Goto Y."/>
            <person name="Shimizu F."/>
            <person name="Wakebe H."/>
            <person name="Hishigaki H."/>
            <person name="Watanabe T."/>
            <person name="Sugiyama A."/>
            <person name="Takemoto M."/>
            <person name="Kawakami B."/>
            <person name="Yamazaki M."/>
            <person name="Watanabe K."/>
            <person name="Kumagai A."/>
            <person name="Itakura S."/>
            <person name="Fukuzumi Y."/>
            <person name="Fujimori Y."/>
            <person name="Komiyama M."/>
            <person name="Tashiro H."/>
            <person name="Tanigami A."/>
            <person name="Fujiwara T."/>
            <person name="Ono T."/>
            <person name="Yamada K."/>
            <person name="Fujii Y."/>
            <person name="Ozaki K."/>
            <person name="Hirao M."/>
            <person name="Ohmori Y."/>
            <person name="Kawabata A."/>
            <person name="Hikiji T."/>
            <person name="Kobatake N."/>
            <person name="Inagaki H."/>
            <person name="Ikema Y."/>
            <person name="Okamoto S."/>
            <person name="Okitani R."/>
            <person name="Kawakami T."/>
            <person name="Noguchi S."/>
            <person name="Itoh T."/>
            <person name="Shigeta K."/>
            <person name="Senba T."/>
            <person name="Matsumura K."/>
            <person name="Nakajima Y."/>
            <person name="Mizuno T."/>
            <person name="Morinaga M."/>
            <person name="Sasaki M."/>
            <person name="Togashi T."/>
            <person name="Oyama M."/>
            <person name="Hata H."/>
            <person name="Watanabe M."/>
            <person name="Komatsu T."/>
            <person name="Mizushima-Sugano J."/>
            <person name="Satoh T."/>
            <person name="Shirai Y."/>
            <person name="Takahashi Y."/>
            <person name="Nakagawa K."/>
            <person name="Okumura K."/>
            <person name="Nagase T."/>
            <person name="Nomura N."/>
            <person name="Kikuchi H."/>
            <person name="Masuho Y."/>
            <person name="Yamashita R."/>
            <person name="Nakai K."/>
            <person name="Yada T."/>
            <person name="Nakamura Y."/>
            <person name="Ohara O."/>
            <person name="Isogai T."/>
            <person name="Sugano S."/>
        </authorList>
    </citation>
    <scope>NUCLEOTIDE SEQUENCE [LARGE SCALE MRNA] (ISOFORMS 1; 8 AND 9)</scope>
</reference>
<reference key="4">
    <citation type="submission" date="2005-03" db="EMBL/GenBank/DDBJ databases">
        <authorList>
            <person name="Totoki Y."/>
            <person name="Toyoda A."/>
            <person name="Takeda T."/>
            <person name="Sakaki Y."/>
            <person name="Tanaka A."/>
            <person name="Yokoyama S."/>
            <person name="Ohara O."/>
            <person name="Nagase T."/>
            <person name="Kikuno R.F."/>
        </authorList>
    </citation>
    <scope>NUCLEOTIDE SEQUENCE [LARGE SCALE MRNA] (ISOFORM 2)</scope>
    <source>
        <tissue>Brain</tissue>
    </source>
</reference>
<reference key="5">
    <citation type="journal article" date="2011" name="Invest. Ophthalmol. Vis. Sci.">
        <title>Full-length transcriptome analysis of human retina-derived cell lines ARPE-19 and Y79 using the vector-capping method.</title>
        <authorList>
            <person name="Oshikawa M."/>
            <person name="Tsutsui C."/>
            <person name="Ikegami T."/>
            <person name="Fuchida Y."/>
            <person name="Matsubara M."/>
            <person name="Toyama S."/>
            <person name="Usami R."/>
            <person name="Ohtoko K."/>
            <person name="Kato S."/>
        </authorList>
    </citation>
    <scope>NUCLEOTIDE SEQUENCE [LARGE SCALE MRNA]</scope>
</reference>
<reference key="6">
    <citation type="journal article" date="2005" name="Nature">
        <title>Generation and annotation of the DNA sequences of human chromosomes 2 and 4.</title>
        <authorList>
            <person name="Hillier L.W."/>
            <person name="Graves T.A."/>
            <person name="Fulton R.S."/>
            <person name="Fulton L.A."/>
            <person name="Pepin K.H."/>
            <person name="Minx P."/>
            <person name="Wagner-McPherson C."/>
            <person name="Layman D."/>
            <person name="Wylie K."/>
            <person name="Sekhon M."/>
            <person name="Becker M.C."/>
            <person name="Fewell G.A."/>
            <person name="Delehaunty K.D."/>
            <person name="Miner T.L."/>
            <person name="Nash W.E."/>
            <person name="Kremitzki C."/>
            <person name="Oddy L."/>
            <person name="Du H."/>
            <person name="Sun H."/>
            <person name="Bradshaw-Cordum H."/>
            <person name="Ali J."/>
            <person name="Carter J."/>
            <person name="Cordes M."/>
            <person name="Harris A."/>
            <person name="Isak A."/>
            <person name="van Brunt A."/>
            <person name="Nguyen C."/>
            <person name="Du F."/>
            <person name="Courtney L."/>
            <person name="Kalicki J."/>
            <person name="Ozersky P."/>
            <person name="Abbott S."/>
            <person name="Armstrong J."/>
            <person name="Belter E.A."/>
            <person name="Caruso L."/>
            <person name="Cedroni M."/>
            <person name="Cotton M."/>
            <person name="Davidson T."/>
            <person name="Desai A."/>
            <person name="Elliott G."/>
            <person name="Erb T."/>
            <person name="Fronick C."/>
            <person name="Gaige T."/>
            <person name="Haakenson W."/>
            <person name="Haglund K."/>
            <person name="Holmes A."/>
            <person name="Harkins R."/>
            <person name="Kim K."/>
            <person name="Kruchowski S.S."/>
            <person name="Strong C.M."/>
            <person name="Grewal N."/>
            <person name="Goyea E."/>
            <person name="Hou S."/>
            <person name="Levy A."/>
            <person name="Martinka S."/>
            <person name="Mead K."/>
            <person name="McLellan M.D."/>
            <person name="Meyer R."/>
            <person name="Randall-Maher J."/>
            <person name="Tomlinson C."/>
            <person name="Dauphin-Kohlberg S."/>
            <person name="Kozlowicz-Reilly A."/>
            <person name="Shah N."/>
            <person name="Swearengen-Shahid S."/>
            <person name="Snider J."/>
            <person name="Strong J.T."/>
            <person name="Thompson J."/>
            <person name="Yoakum M."/>
            <person name="Leonard S."/>
            <person name="Pearman C."/>
            <person name="Trani L."/>
            <person name="Radionenko M."/>
            <person name="Waligorski J.E."/>
            <person name="Wang C."/>
            <person name="Rock S.M."/>
            <person name="Tin-Wollam A.-M."/>
            <person name="Maupin R."/>
            <person name="Latreille P."/>
            <person name="Wendl M.C."/>
            <person name="Yang S.-P."/>
            <person name="Pohl C."/>
            <person name="Wallis J.W."/>
            <person name="Spieth J."/>
            <person name="Bieri T.A."/>
            <person name="Berkowicz N."/>
            <person name="Nelson J.O."/>
            <person name="Osborne J."/>
            <person name="Ding L."/>
            <person name="Meyer R."/>
            <person name="Sabo A."/>
            <person name="Shotland Y."/>
            <person name="Sinha P."/>
            <person name="Wohldmann P.E."/>
            <person name="Cook L.L."/>
            <person name="Hickenbotham M.T."/>
            <person name="Eldred J."/>
            <person name="Williams D."/>
            <person name="Jones T.A."/>
            <person name="She X."/>
            <person name="Ciccarelli F.D."/>
            <person name="Izaurralde E."/>
            <person name="Taylor J."/>
            <person name="Schmutz J."/>
            <person name="Myers R.M."/>
            <person name="Cox D.R."/>
            <person name="Huang X."/>
            <person name="McPherson J.D."/>
            <person name="Mardis E.R."/>
            <person name="Clifton S.W."/>
            <person name="Warren W.C."/>
            <person name="Chinwalla A.T."/>
            <person name="Eddy S.R."/>
            <person name="Marra M.A."/>
            <person name="Ovcharenko I."/>
            <person name="Furey T.S."/>
            <person name="Miller W."/>
            <person name="Eichler E.E."/>
            <person name="Bork P."/>
            <person name="Suyama M."/>
            <person name="Torrents D."/>
            <person name="Waterston R.H."/>
            <person name="Wilson R.K."/>
        </authorList>
    </citation>
    <scope>NUCLEOTIDE SEQUENCE [LARGE SCALE GENOMIC DNA]</scope>
</reference>
<reference key="7">
    <citation type="submission" date="2005-09" db="EMBL/GenBank/DDBJ databases">
        <authorList>
            <person name="Mural R.J."/>
            <person name="Istrail S."/>
            <person name="Sutton G.G."/>
            <person name="Florea L."/>
            <person name="Halpern A.L."/>
            <person name="Mobarry C.M."/>
            <person name="Lippert R."/>
            <person name="Walenz B."/>
            <person name="Shatkay H."/>
            <person name="Dew I."/>
            <person name="Miller J.R."/>
            <person name="Flanigan M.J."/>
            <person name="Edwards N.J."/>
            <person name="Bolanos R."/>
            <person name="Fasulo D."/>
            <person name="Halldorsson B.V."/>
            <person name="Hannenhalli S."/>
            <person name="Turner R."/>
            <person name="Yooseph S."/>
            <person name="Lu F."/>
            <person name="Nusskern D.R."/>
            <person name="Shue B.C."/>
            <person name="Zheng X.H."/>
            <person name="Zhong F."/>
            <person name="Delcher A.L."/>
            <person name="Huson D.H."/>
            <person name="Kravitz S.A."/>
            <person name="Mouchard L."/>
            <person name="Reinert K."/>
            <person name="Remington K.A."/>
            <person name="Clark A.G."/>
            <person name="Waterman M.S."/>
            <person name="Eichler E.E."/>
            <person name="Adams M.D."/>
            <person name="Hunkapiller M.W."/>
            <person name="Myers E.W."/>
            <person name="Venter J.C."/>
        </authorList>
    </citation>
    <scope>NUCLEOTIDE SEQUENCE [LARGE SCALE GENOMIC DNA]</scope>
</reference>
<reference key="8">
    <citation type="journal article" date="2004" name="Genome Res.">
        <title>The status, quality, and expansion of the NIH full-length cDNA project: the Mammalian Gene Collection (MGC).</title>
        <authorList>
            <consortium name="The MGC Project Team"/>
        </authorList>
    </citation>
    <scope>NUCLEOTIDE SEQUENCE [LARGE SCALE MRNA] (ISOFORMS 1 AND 3)</scope>
    <scope>VARIANT ALA-439</scope>
    <source>
        <tissue>Eye</tissue>
    </source>
</reference>
<reference key="9">
    <citation type="journal article" date="1995" name="Mol. Biol. Cell">
        <title>A novel isoform of beta adducin utilizes an alternatively spliced exon near the C-terminus.</title>
        <authorList>
            <person name="Sinard J.H."/>
            <person name="Stewart G.W."/>
            <person name="Argent A.C."/>
            <person name="Gilligan D.M."/>
            <person name="Morrow J.S."/>
        </authorList>
    </citation>
    <scope>NUCLEOTIDE SEQUENCE [MRNA] OF 332-726 (ISOFORM 3)</scope>
    <source>
        <tissue>Bone marrow</tissue>
    </source>
</reference>
<reference key="10">
    <citation type="journal article" date="1995" name="Gene">
        <title>Genomic organisation and chromosomal localisation of the gene encoding human beta adducin.</title>
        <authorList>
            <person name="Tisminetzky S."/>
            <person name="Devescovi G."/>
            <person name="Tripodi G."/>
            <person name="Muro A."/>
            <person name="Bianchi G."/>
            <person name="Colombi M."/>
            <person name="Moro L."/>
            <person name="Barlati S."/>
            <person name="Tuteja R."/>
            <person name="Baralle F.E."/>
        </authorList>
    </citation>
    <scope>NUCLEOTIDE SEQUENCE [GENOMIC DNA] OF 462-559 (ISOFORM 2)</scope>
    <scope>ALTERNATIVE SPLICING</scope>
</reference>
<reference key="11">
    <citation type="journal article" date="1996" name="J. Biol. Chem.">
        <title>Adducin regulation. Definition of the calmodulin-binding domain and sites of phosphorylation by protein kinases A and C.</title>
        <authorList>
            <person name="Matsuoka Y."/>
            <person name="Hughes C.A."/>
            <person name="Bennett V."/>
        </authorList>
    </citation>
    <scope>PHOSPHORYLATION AT THR-55; SER-703 AND SER-713</scope>
    <scope>PARTIAL PROTEIN SEQUENCE</scope>
</reference>
<reference key="12">
    <citation type="journal article" date="2008" name="J. Biol. Chem.">
        <title>Dematin and adducin provide a novel link between the spectrin cytoskeleton and human erythrocyte membrane by directly interacting with glucose transporter-1.</title>
        <authorList>
            <person name="Khan A.A."/>
            <person name="Hanada T."/>
            <person name="Mohseni M."/>
            <person name="Jeong J.J."/>
            <person name="Zeng L."/>
            <person name="Gaetani M."/>
            <person name="Li D."/>
            <person name="Reed B.C."/>
            <person name="Speicher D.W."/>
            <person name="Chishti A.H."/>
        </authorList>
    </citation>
    <scope>FUNCTION</scope>
    <scope>IDENTIFICATION IN A COMPLEX WITH DMTN AND SLC2A1</scope>
    <scope>INTERACTION WITH SLC2A1</scope>
</reference>
<reference key="13">
    <citation type="journal article" date="2009" name="Anal. Chem.">
        <title>Lys-N and trypsin cover complementary parts of the phosphoproteome in a refined SCX-based approach.</title>
        <authorList>
            <person name="Gauci S."/>
            <person name="Helbig A.O."/>
            <person name="Slijper M."/>
            <person name="Krijgsveld J."/>
            <person name="Heck A.J."/>
            <person name="Mohammed S."/>
        </authorList>
    </citation>
    <scope>IDENTIFICATION BY MASS SPECTROMETRY [LARGE SCALE ANALYSIS]</scope>
</reference>
<reference key="14">
    <citation type="journal article" date="2011" name="Sci. Signal.">
        <title>System-wide temporal characterization of the proteome and phosphoproteome of human embryonic stem cell differentiation.</title>
        <authorList>
            <person name="Rigbolt K.T."/>
            <person name="Prokhorova T.A."/>
            <person name="Akimov V."/>
            <person name="Henningsen J."/>
            <person name="Johansen P.T."/>
            <person name="Kratchmarova I."/>
            <person name="Kassem M."/>
            <person name="Mann M."/>
            <person name="Olsen J.V."/>
            <person name="Blagoev B."/>
        </authorList>
    </citation>
    <scope>PHOSPHORYLATION [LARGE SCALE ANALYSIS] AT SER-530; SER-592; SER-596; SER-600; SER-604; THR-611; SER-613; SER-617; SER-693 AND SER-697</scope>
    <scope>IDENTIFICATION BY MASS SPECTROMETRY [LARGE SCALE ANALYSIS]</scope>
</reference>
<reference key="15">
    <citation type="journal article" date="2013" name="J. Proteome Res.">
        <title>Toward a comprehensive characterization of a human cancer cell phosphoproteome.</title>
        <authorList>
            <person name="Zhou H."/>
            <person name="Di Palma S."/>
            <person name="Preisinger C."/>
            <person name="Peng M."/>
            <person name="Polat A.N."/>
            <person name="Heck A.J."/>
            <person name="Mohammed S."/>
        </authorList>
    </citation>
    <scope>PHOSPHORYLATION [LARGE SCALE ANALYSIS] AT SER-11; SER-530; SER-532; SER-592; SER-596; SER-600; SER-613; SER-617; SER-621; THR-675; SER-693 AND SER-697</scope>
    <scope>IDENTIFICATION BY MASS SPECTROMETRY [LARGE SCALE ANALYSIS]</scope>
    <source>
        <tissue>Erythroleukemia</tissue>
    </source>
</reference>
<reference key="16">
    <citation type="journal article" date="2014" name="J. Proteomics">
        <title>An enzyme assisted RP-RPLC approach for in-depth analysis of human liver phosphoproteome.</title>
        <authorList>
            <person name="Bian Y."/>
            <person name="Song C."/>
            <person name="Cheng K."/>
            <person name="Dong M."/>
            <person name="Wang F."/>
            <person name="Huang J."/>
            <person name="Sun D."/>
            <person name="Wang L."/>
            <person name="Ye M."/>
            <person name="Zou H."/>
        </authorList>
    </citation>
    <scope>PHOSPHORYLATION [LARGE SCALE ANALYSIS] AT SER-596</scope>
    <scope>IDENTIFICATION BY MASS SPECTROMETRY [LARGE SCALE ANALYSIS]</scope>
    <source>
        <tissue>Liver</tissue>
    </source>
</reference>
<sequence length="726" mass="80854">MSEETVPEAASPPPPQGQPYFDRFSEDDPEYMRLRNRAADLRQDFNLMEQKKRVTMILQSPSFREELEGLIQEQMKKGNNSSNIWALRQIADFMASTSHAVFPTSSMNVSMMTPINDLHTADSLNLAKGERLMRCKISSVYRLLDLYGWAQLSDTYVTLRVSKEQDHFLISPKGVSCSEVTASSLIKVNILGEVVEKGSSCFPVDTTGFCLHSAIYAARPDVRCIIHLHTPATAAVSAMKWGLLPVSHNALLVGDMAYYDFNGEMEQEADRINLQKCLGPTCKILVLRNHGVVALGDTVEEAFYKIFHLQAACEIQVSALSSAGGVENLILLEQEKHRPHEVGSVQWAGSTFGPMQKSRLGEHEFEALMRMLDNLGYRTGYTYRHPFVQEKTKHKSEVEIPATVTAFVFEEDGAPVPALRQHAQKQQKEKTRWLNTPNTYLRVNVADEVQRSMGSPRPKTTWMKADEVEKSSSGMPIRIENPNQFVPLYTDPQEVLEMRNKIREQNRQDVKSAGPQSQLLASVIAEKSRSPSTESQLMSKGDEDTKDDSEETVPNPFSQLTDQELEEYKKEVERKKLELDGEKETAPEEPGSPAKSAPASPVQSPAKEAETKSPLVSPSKSLEEGTKKTETSKAATTEPETTQPEGVVVNGREEEQTAEEILSKGLSQMTTSADTDVDTSKDKTESVTSGPMSPEGSPSKSPSKKKKKFRTPSFLKKSKKKEKVES</sequence>
<comment type="function">
    <text evidence="7">Membrane-cytoskeleton-associated protein that promotes the assembly of the spectrin-actin network. Binds to the erythrocyte membrane receptor SLC2A1/GLUT1 and may therefore provide a link between the spectrin cytoskeleton to the plasma membrane. Binds to calmodulin. Calmodulin binds preferentially to the beta subunit.</text>
</comment>
<comment type="subunit">
    <text evidence="7">Heterodimer of an alpha and a beta subunit. Found in a complex with ADD2, DMTN and SLC2A1. Interacts with SLC2A1.</text>
</comment>
<comment type="subcellular location">
    <subcellularLocation>
        <location>Cytoplasm</location>
        <location>Cytoskeleton</location>
    </subcellularLocation>
    <subcellularLocation>
        <location>Cell membrane</location>
        <topology>Peripheral membrane protein</topology>
        <orientation>Cytoplasmic side</orientation>
    </subcellularLocation>
</comment>
<comment type="alternative products">
    <event type="alternative splicing"/>
    <isoform>
        <id>P35612-1</id>
        <name>1</name>
        <sequence type="displayed"/>
    </isoform>
    <isoform>
        <id>P35612-2</id>
        <name>2</name>
        <name>Adducin 63</name>
        <sequence type="described" ref="VSP_000181 VSP_000182"/>
    </isoform>
    <isoform>
        <id>P35612-3</id>
        <name>3</name>
        <name>Beta-4</name>
        <name>E</name>
        <sequence type="described" ref="VSP_000183"/>
    </isoform>
    <isoform>
        <id>P35612-4</id>
        <name>4</name>
        <name>Beta-4a</name>
        <sequence type="described" ref="VSP_017244 VSP_017246"/>
    </isoform>
    <isoform>
        <id>P35612-5</id>
        <name>5</name>
        <name>Beta-4b</name>
        <sequence type="described" ref="VSP_017242 VSP_017243 VSP_017245"/>
    </isoform>
    <isoform>
        <id>P35612-6</id>
        <name>6</name>
        <name>Beta-4c</name>
        <sequence type="described" ref="VSP_017242 VSP_017244 VSP_017246"/>
    </isoform>
    <isoform>
        <id>P35612-7</id>
        <name>7</name>
        <name>Beta-4d</name>
        <sequence type="described" ref="VSP_017241 VSP_017244 VSP_017246"/>
    </isoform>
    <isoform>
        <id>P35612-8</id>
        <name>8</name>
        <sequence type="described" ref="VSP_043625 VSP_000181 VSP_000182"/>
    </isoform>
    <isoform>
        <id>P35612-9</id>
        <name>9</name>
        <sequence type="described" ref="VSP_055309 VSP_000181 VSP_000182"/>
    </isoform>
    <text>Additional isoforms seem to exist.</text>
</comment>
<comment type="tissue specificity">
    <text evidence="5">Expressed mainly in brain, spleen, kidney cortex and medulla, and heart. Also expressed in human umbilical vein endothelial cells, human vascular smooth muscle cells, kidney tubular cells and K-562 cell line.</text>
</comment>
<comment type="developmental stage">
    <text evidence="5">Fetal kidney expresses isoforms 3, 4, 5, 6 and 7, and fetal liver expresses isoforms 3 and 4.</text>
</comment>
<comment type="domain">
    <text>Each subunit is comprised of three regions: a NH2-terminal protease-resistant globular head region, a short connecting subdomain, and a protease-sensitive tail region.</text>
</comment>
<comment type="PTM">
    <text>The N-terminus is blocked.</text>
</comment>
<comment type="similarity">
    <text evidence="14">Belongs to the aldolase class II family. Adducin subfamily.</text>
</comment>
<comment type="sequence caution" evidence="14">
    <conflict type="erroneous initiation">
        <sequence resource="EMBL-CDS" id="BAD92464"/>
    </conflict>
</comment>
<keyword id="KW-0009">Actin-binding</keyword>
<keyword id="KW-0025">Alternative splicing</keyword>
<keyword id="KW-0112">Calmodulin-binding</keyword>
<keyword id="KW-1003">Cell membrane</keyword>
<keyword id="KW-0963">Cytoplasm</keyword>
<keyword id="KW-0206">Cytoskeleton</keyword>
<keyword id="KW-0903">Direct protein sequencing</keyword>
<keyword id="KW-0472">Membrane</keyword>
<keyword id="KW-0597">Phosphoprotein</keyword>
<keyword id="KW-1267">Proteomics identification</keyword>
<keyword id="KW-1185">Reference proteome</keyword>
<name>ADDB_HUMAN</name>
<evidence type="ECO:0000250" key="1">
    <source>
        <dbReference type="UniProtKB" id="Q05764"/>
    </source>
</evidence>
<evidence type="ECO:0000250" key="2">
    <source>
        <dbReference type="UniProtKB" id="Q9QYB8"/>
    </source>
</evidence>
<evidence type="ECO:0000255" key="3"/>
<evidence type="ECO:0000256" key="4">
    <source>
        <dbReference type="SAM" id="MobiDB-lite"/>
    </source>
</evidence>
<evidence type="ECO:0000269" key="5">
    <source>
    </source>
</evidence>
<evidence type="ECO:0000269" key="6">
    <source>
    </source>
</evidence>
<evidence type="ECO:0000269" key="7">
    <source>
    </source>
</evidence>
<evidence type="ECO:0000269" key="8">
    <source>
    </source>
</evidence>
<evidence type="ECO:0000303" key="9">
    <source>
    </source>
</evidence>
<evidence type="ECO:0000303" key="10">
    <source>
    </source>
</evidence>
<evidence type="ECO:0000303" key="11">
    <source>
    </source>
</evidence>
<evidence type="ECO:0000303" key="12">
    <source ref="4"/>
</evidence>
<evidence type="ECO:0000303" key="13">
    <source ref="9"/>
</evidence>
<evidence type="ECO:0000305" key="14"/>
<evidence type="ECO:0007744" key="15">
    <source>
    </source>
</evidence>
<evidence type="ECO:0007744" key="16">
    <source>
    </source>
</evidence>
<evidence type="ECO:0007744" key="17">
    <source>
    </source>
</evidence>